<proteinExistence type="evidence at protein level"/>
<accession>P11758</accession>
<name>HBB_MYOVE</name>
<dbReference type="PIR" id="B25357">
    <property type="entry name" value="B25357"/>
</dbReference>
<dbReference type="SMR" id="P11758"/>
<dbReference type="GO" id="GO:0072562">
    <property type="term" value="C:blood microparticle"/>
    <property type="evidence" value="ECO:0007669"/>
    <property type="project" value="TreeGrafter"/>
</dbReference>
<dbReference type="GO" id="GO:0031838">
    <property type="term" value="C:haptoglobin-hemoglobin complex"/>
    <property type="evidence" value="ECO:0007669"/>
    <property type="project" value="TreeGrafter"/>
</dbReference>
<dbReference type="GO" id="GO:0005833">
    <property type="term" value="C:hemoglobin complex"/>
    <property type="evidence" value="ECO:0007669"/>
    <property type="project" value="InterPro"/>
</dbReference>
<dbReference type="GO" id="GO:0031720">
    <property type="term" value="F:haptoglobin binding"/>
    <property type="evidence" value="ECO:0007669"/>
    <property type="project" value="TreeGrafter"/>
</dbReference>
<dbReference type="GO" id="GO:0020037">
    <property type="term" value="F:heme binding"/>
    <property type="evidence" value="ECO:0007669"/>
    <property type="project" value="InterPro"/>
</dbReference>
<dbReference type="GO" id="GO:0031721">
    <property type="term" value="F:hemoglobin alpha binding"/>
    <property type="evidence" value="ECO:0007669"/>
    <property type="project" value="TreeGrafter"/>
</dbReference>
<dbReference type="GO" id="GO:0046872">
    <property type="term" value="F:metal ion binding"/>
    <property type="evidence" value="ECO:0007669"/>
    <property type="project" value="UniProtKB-KW"/>
</dbReference>
<dbReference type="GO" id="GO:0043177">
    <property type="term" value="F:organic acid binding"/>
    <property type="evidence" value="ECO:0007669"/>
    <property type="project" value="TreeGrafter"/>
</dbReference>
<dbReference type="GO" id="GO:0019825">
    <property type="term" value="F:oxygen binding"/>
    <property type="evidence" value="ECO:0007669"/>
    <property type="project" value="InterPro"/>
</dbReference>
<dbReference type="GO" id="GO:0005344">
    <property type="term" value="F:oxygen carrier activity"/>
    <property type="evidence" value="ECO:0007669"/>
    <property type="project" value="UniProtKB-KW"/>
</dbReference>
<dbReference type="GO" id="GO:0004601">
    <property type="term" value="F:peroxidase activity"/>
    <property type="evidence" value="ECO:0007669"/>
    <property type="project" value="TreeGrafter"/>
</dbReference>
<dbReference type="GO" id="GO:0042744">
    <property type="term" value="P:hydrogen peroxide catabolic process"/>
    <property type="evidence" value="ECO:0007669"/>
    <property type="project" value="TreeGrafter"/>
</dbReference>
<dbReference type="CDD" id="cd08925">
    <property type="entry name" value="Hb-beta-like"/>
    <property type="match status" value="1"/>
</dbReference>
<dbReference type="FunFam" id="1.10.490.10:FF:000001">
    <property type="entry name" value="Hemoglobin subunit beta"/>
    <property type="match status" value="1"/>
</dbReference>
<dbReference type="Gene3D" id="1.10.490.10">
    <property type="entry name" value="Globins"/>
    <property type="match status" value="1"/>
</dbReference>
<dbReference type="InterPro" id="IPR000971">
    <property type="entry name" value="Globin"/>
</dbReference>
<dbReference type="InterPro" id="IPR009050">
    <property type="entry name" value="Globin-like_sf"/>
</dbReference>
<dbReference type="InterPro" id="IPR012292">
    <property type="entry name" value="Globin/Proto"/>
</dbReference>
<dbReference type="InterPro" id="IPR002337">
    <property type="entry name" value="Hemoglobin_b"/>
</dbReference>
<dbReference type="InterPro" id="IPR050056">
    <property type="entry name" value="Hemoglobin_oxygen_transport"/>
</dbReference>
<dbReference type="PANTHER" id="PTHR11442">
    <property type="entry name" value="HEMOGLOBIN FAMILY MEMBER"/>
    <property type="match status" value="1"/>
</dbReference>
<dbReference type="PANTHER" id="PTHR11442:SF42">
    <property type="entry name" value="HEMOGLOBIN SUBUNIT BETA"/>
    <property type="match status" value="1"/>
</dbReference>
<dbReference type="Pfam" id="PF00042">
    <property type="entry name" value="Globin"/>
    <property type="match status" value="1"/>
</dbReference>
<dbReference type="PRINTS" id="PR00814">
    <property type="entry name" value="BETAHAEM"/>
</dbReference>
<dbReference type="SUPFAM" id="SSF46458">
    <property type="entry name" value="Globin-like"/>
    <property type="match status" value="1"/>
</dbReference>
<dbReference type="PROSITE" id="PS01033">
    <property type="entry name" value="GLOBIN"/>
    <property type="match status" value="1"/>
</dbReference>
<reference key="1">
    <citation type="journal article" date="1986" name="Biol. Chem. Hoppe-Seyler">
        <title>The primary structure of a mouse-eared bat (Myotis velifer, Chiroptera) hemoglobin.</title>
        <authorList>
            <person name="Kleinschmidt T."/>
            <person name="Koop B."/>
            <person name="Braunitzer G."/>
        </authorList>
    </citation>
    <scope>PROTEIN SEQUENCE</scope>
</reference>
<organism>
    <name type="scientific">Myotis velifer</name>
    <name type="common">Mouse-eared bat</name>
    <name type="synonym">Cave bat</name>
    <dbReference type="NCBI Taxonomy" id="9435"/>
    <lineage>
        <taxon>Eukaryota</taxon>
        <taxon>Metazoa</taxon>
        <taxon>Chordata</taxon>
        <taxon>Craniata</taxon>
        <taxon>Vertebrata</taxon>
        <taxon>Euteleostomi</taxon>
        <taxon>Mammalia</taxon>
        <taxon>Eutheria</taxon>
        <taxon>Laurasiatheria</taxon>
        <taxon>Chiroptera</taxon>
        <taxon>Yangochiroptera</taxon>
        <taxon>Vespertilionidae</taxon>
        <taxon>Myotis</taxon>
    </lineage>
</organism>
<keyword id="KW-0007">Acetylation</keyword>
<keyword id="KW-0903">Direct protein sequencing</keyword>
<keyword id="KW-0349">Heme</keyword>
<keyword id="KW-0408">Iron</keyword>
<keyword id="KW-0479">Metal-binding</keyword>
<keyword id="KW-0561">Oxygen transport</keyword>
<keyword id="KW-0597">Phosphoprotein</keyword>
<keyword id="KW-0702">S-nitrosylation</keyword>
<keyword id="KW-0813">Transport</keyword>
<feature type="chain" id="PRO_0000053032" description="Hemoglobin subunit beta">
    <location>
        <begin position="1"/>
        <end position="146"/>
    </location>
</feature>
<feature type="domain" description="Globin" evidence="3">
    <location>
        <begin position="2"/>
        <end position="146"/>
    </location>
</feature>
<feature type="binding site" description="distal binding residue">
    <location>
        <position position="63"/>
    </location>
    <ligand>
        <name>heme b</name>
        <dbReference type="ChEBI" id="CHEBI:60344"/>
    </ligand>
    <ligandPart>
        <name>Fe</name>
        <dbReference type="ChEBI" id="CHEBI:18248"/>
    </ligandPart>
</feature>
<feature type="binding site" description="proximal binding residue">
    <location>
        <position position="92"/>
    </location>
    <ligand>
        <name>heme b</name>
        <dbReference type="ChEBI" id="CHEBI:60344"/>
    </ligand>
    <ligandPart>
        <name>Fe</name>
        <dbReference type="ChEBI" id="CHEBI:18248"/>
    </ligandPart>
</feature>
<feature type="modified residue" description="N-acetylvaline" evidence="1">
    <location>
        <position position="1"/>
    </location>
</feature>
<feature type="modified residue" description="Phosphoserine" evidence="2">
    <location>
        <position position="44"/>
    </location>
</feature>
<feature type="modified residue" description="N6-acetyllysine" evidence="2">
    <location>
        <position position="59"/>
    </location>
</feature>
<feature type="modified residue" description="N6-acetyllysine" evidence="2">
    <location>
        <position position="82"/>
    </location>
</feature>
<feature type="modified residue" description="S-nitrosocysteine" evidence="2">
    <location>
        <position position="93"/>
    </location>
</feature>
<feature type="modified residue" description="N6-acetyllysine" evidence="2">
    <location>
        <position position="144"/>
    </location>
</feature>
<evidence type="ECO:0000250" key="1">
    <source>
        <dbReference type="UniProtKB" id="P02086"/>
    </source>
</evidence>
<evidence type="ECO:0000250" key="2">
    <source>
        <dbReference type="UniProtKB" id="P68871"/>
    </source>
</evidence>
<evidence type="ECO:0000255" key="3">
    <source>
        <dbReference type="PROSITE-ProRule" id="PRU00238"/>
    </source>
</evidence>
<gene>
    <name type="primary">HBB</name>
</gene>
<comment type="function">
    <text>Involved in oxygen transport from the lung to the various peripheral tissues.</text>
</comment>
<comment type="subunit">
    <text>Heterotetramer of two alpha chains and two beta chains.</text>
</comment>
<comment type="tissue specificity">
    <text>Red blood cells.</text>
</comment>
<comment type="similarity">
    <text evidence="3">Belongs to the globin family.</text>
</comment>
<protein>
    <recommendedName>
        <fullName>Hemoglobin subunit beta</fullName>
    </recommendedName>
    <alternativeName>
        <fullName>Beta-globin</fullName>
    </alternativeName>
    <alternativeName>
        <fullName>Hemoglobin beta chain</fullName>
    </alternativeName>
</protein>
<sequence length="146" mass="15796">VHLTADEKAAVSGLWGKVNVDEVGGEALGRLLVVYPWTQRFFTSFGDLSNAAAVMGNSKVKAHGKKVLNSFGEGLKNVDNLKGTFASLSELHCDKLHVDPENFRLLGNVLVIVLARHFGKEFTPQVQGAFQKLALGVATALAHKYH</sequence>